<name>PSAB_CHLRE</name>
<protein>
    <recommendedName>
        <fullName>Photosystem I P700 chlorophyll a apoprotein A2</fullName>
        <ecNumber>1.97.1.12</ecNumber>
    </recommendedName>
    <alternativeName>
        <fullName>PSI-B</fullName>
    </alternativeName>
    <alternativeName>
        <fullName>PsaB</fullName>
    </alternativeName>
</protein>
<gene>
    <name type="primary">psaB</name>
    <name type="synonym">ps1a2</name>
</gene>
<dbReference type="EC" id="1.97.1.12"/>
<dbReference type="EMBL" id="X05848">
    <property type="protein sequence ID" value="CAA29287.1"/>
    <property type="molecule type" value="Genomic_DNA"/>
</dbReference>
<dbReference type="EMBL" id="U57326">
    <property type="protein sequence ID" value="AAN78307.1"/>
    <property type="molecule type" value="Genomic_DNA"/>
</dbReference>
<dbReference type="EMBL" id="FJ423446">
    <property type="protein sequence ID" value="ACJ50135.1"/>
    <property type="molecule type" value="Genomic_DNA"/>
</dbReference>
<dbReference type="EMBL" id="AB044470">
    <property type="protein sequence ID" value="BAB18396.1"/>
    <property type="molecule type" value="Genomic_DNA"/>
</dbReference>
<dbReference type="EMBL" id="J01399">
    <property type="status" value="NOT_ANNOTATED_CDS"/>
    <property type="molecule type" value="Genomic_DNA"/>
</dbReference>
<dbReference type="EMBL" id="S67792">
    <property type="protein sequence ID" value="AAB20423.2"/>
    <property type="molecule type" value="Genomic_DNA"/>
</dbReference>
<dbReference type="EMBL" id="BK000554">
    <property type="protein sequence ID" value="DAA00949.2"/>
    <property type="molecule type" value="Genomic_DNA"/>
</dbReference>
<dbReference type="PIR" id="B28341">
    <property type="entry name" value="B28341"/>
</dbReference>
<dbReference type="PIR" id="S18319">
    <property type="entry name" value="S18319"/>
</dbReference>
<dbReference type="RefSeq" id="NP_958404.1">
    <property type="nucleotide sequence ID" value="NC_005353.1"/>
</dbReference>
<dbReference type="PDB" id="6IJJ">
    <property type="method" value="EM"/>
    <property type="resolution" value="2.89 A"/>
    <property type="chains" value="B=1-735"/>
</dbReference>
<dbReference type="PDB" id="6IJO">
    <property type="method" value="EM"/>
    <property type="resolution" value="3.30 A"/>
    <property type="chains" value="B=1-735"/>
</dbReference>
<dbReference type="PDB" id="6JO5">
    <property type="method" value="EM"/>
    <property type="resolution" value="2.90 A"/>
    <property type="chains" value="B=4-735"/>
</dbReference>
<dbReference type="PDB" id="6JO6">
    <property type="method" value="EM"/>
    <property type="resolution" value="2.90 A"/>
    <property type="chains" value="B=4-735"/>
</dbReference>
<dbReference type="PDB" id="7BGI">
    <property type="method" value="EM"/>
    <property type="resolution" value="2.54 A"/>
    <property type="chains" value="B=2-734"/>
</dbReference>
<dbReference type="PDB" id="7BLX">
    <property type="method" value="EM"/>
    <property type="resolution" value="3.15 A"/>
    <property type="chains" value="B=2-734"/>
</dbReference>
<dbReference type="PDB" id="7D0J">
    <property type="method" value="EM"/>
    <property type="resolution" value="3.42 A"/>
    <property type="chains" value="B=2-735"/>
</dbReference>
<dbReference type="PDB" id="7DZ7">
    <property type="method" value="EM"/>
    <property type="resolution" value="2.84 A"/>
    <property type="chains" value="B=1-735"/>
</dbReference>
<dbReference type="PDB" id="7DZ8">
    <property type="method" value="EM"/>
    <property type="resolution" value="3.16 A"/>
    <property type="chains" value="B=1-735"/>
</dbReference>
<dbReference type="PDB" id="7O01">
    <property type="method" value="EM"/>
    <property type="resolution" value="17.10 A"/>
    <property type="chains" value="B/b=2-734"/>
</dbReference>
<dbReference type="PDB" id="7R3K">
    <property type="method" value="EM"/>
    <property type="resolution" value="2.52 A"/>
    <property type="chains" value="B=1-735"/>
</dbReference>
<dbReference type="PDB" id="7WYI">
    <property type="method" value="EM"/>
    <property type="resolution" value="3.90 A"/>
    <property type="chains" value="B=1-735"/>
</dbReference>
<dbReference type="PDB" id="7WZN">
    <property type="method" value="EM"/>
    <property type="resolution" value="4.90 A"/>
    <property type="chains" value="B=1-735"/>
</dbReference>
<dbReference type="PDB" id="7ZQ9">
    <property type="method" value="EM"/>
    <property type="resolution" value="2.74 A"/>
    <property type="chains" value="B=1-735"/>
</dbReference>
<dbReference type="PDB" id="7ZQC">
    <property type="method" value="EM"/>
    <property type="resolution" value="2.31 A"/>
    <property type="chains" value="B=1-735"/>
</dbReference>
<dbReference type="PDB" id="7ZQD">
    <property type="method" value="EM"/>
    <property type="resolution" value="2.97 A"/>
    <property type="chains" value="B/B2=1-735"/>
</dbReference>
<dbReference type="PDB" id="8H2U">
    <property type="method" value="X-ray"/>
    <property type="resolution" value="3.40 A"/>
    <property type="chains" value="B=1-735"/>
</dbReference>
<dbReference type="PDBsum" id="6IJJ"/>
<dbReference type="PDBsum" id="6IJO"/>
<dbReference type="PDBsum" id="6JO5"/>
<dbReference type="PDBsum" id="6JO6"/>
<dbReference type="PDBsum" id="7BGI"/>
<dbReference type="PDBsum" id="7BLX"/>
<dbReference type="PDBsum" id="7D0J"/>
<dbReference type="PDBsum" id="7DZ7"/>
<dbReference type="PDBsum" id="7DZ8"/>
<dbReference type="PDBsum" id="7O01"/>
<dbReference type="PDBsum" id="7R3K"/>
<dbReference type="PDBsum" id="7WYI"/>
<dbReference type="PDBsum" id="7WZN"/>
<dbReference type="PDBsum" id="7ZQ9"/>
<dbReference type="PDBsum" id="7ZQC"/>
<dbReference type="PDBsum" id="7ZQD"/>
<dbReference type="PDBsum" id="8H2U"/>
<dbReference type="EMDB" id="EMD-12180"/>
<dbReference type="EMDB" id="EMD-12227"/>
<dbReference type="EMDB" id="EMD-12672"/>
<dbReference type="EMDB" id="EMD-14248"/>
<dbReference type="EMDB" id="EMD-14867"/>
<dbReference type="EMDB" id="EMD-14870"/>
<dbReference type="EMDB" id="EMD-14871"/>
<dbReference type="EMDB" id="EMD-30536"/>
<dbReference type="EMDB" id="EMD-30925"/>
<dbReference type="EMDB" id="EMD-30926"/>
<dbReference type="EMDB" id="EMD-32892"/>
<dbReference type="EMDB" id="EMD-32907"/>
<dbReference type="EMDB" id="EMD-9678"/>
<dbReference type="EMDB" id="EMD-9680"/>
<dbReference type="EMDB" id="EMD-9853"/>
<dbReference type="EMDB" id="EMD-9854"/>
<dbReference type="SMR" id="P09144"/>
<dbReference type="FunCoup" id="P09144">
    <property type="interactions" value="197"/>
</dbReference>
<dbReference type="IntAct" id="P09144">
    <property type="interactions" value="5"/>
</dbReference>
<dbReference type="STRING" id="3055.P09144"/>
<dbReference type="PaxDb" id="3055-DAA00949"/>
<dbReference type="GeneID" id="2717038"/>
<dbReference type="KEGG" id="cre:ChreCp048"/>
<dbReference type="eggNOG" id="ENOG502QRYE">
    <property type="taxonomic scope" value="Eukaryota"/>
</dbReference>
<dbReference type="HOGENOM" id="CLU_016126_1_0_1"/>
<dbReference type="InParanoid" id="P09144"/>
<dbReference type="BioCyc" id="CHLAMY:CHRECP048-MONOMER"/>
<dbReference type="BioCyc" id="MetaCyc:CHRECP048-MONOMER"/>
<dbReference type="BRENDA" id="1.97.1.12">
    <property type="organism ID" value="1318"/>
</dbReference>
<dbReference type="Proteomes" id="UP000006906">
    <property type="component" value="Chloroplast"/>
</dbReference>
<dbReference type="GO" id="GO:0009535">
    <property type="term" value="C:chloroplast thylakoid membrane"/>
    <property type="evidence" value="ECO:0007669"/>
    <property type="project" value="UniProtKB-SubCell"/>
</dbReference>
<dbReference type="GO" id="GO:0009522">
    <property type="term" value="C:photosystem I"/>
    <property type="evidence" value="ECO:0007669"/>
    <property type="project" value="UniProtKB-KW"/>
</dbReference>
<dbReference type="GO" id="GO:0051539">
    <property type="term" value="F:4 iron, 4 sulfur cluster binding"/>
    <property type="evidence" value="ECO:0007669"/>
    <property type="project" value="UniProtKB-KW"/>
</dbReference>
<dbReference type="GO" id="GO:0016168">
    <property type="term" value="F:chlorophyll binding"/>
    <property type="evidence" value="ECO:0007669"/>
    <property type="project" value="UniProtKB-KW"/>
</dbReference>
<dbReference type="GO" id="GO:0009055">
    <property type="term" value="F:electron transfer activity"/>
    <property type="evidence" value="ECO:0007669"/>
    <property type="project" value="UniProtKB-UniRule"/>
</dbReference>
<dbReference type="GO" id="GO:0000287">
    <property type="term" value="F:magnesium ion binding"/>
    <property type="evidence" value="ECO:0007669"/>
    <property type="project" value="UniProtKB-UniRule"/>
</dbReference>
<dbReference type="GO" id="GO:0016491">
    <property type="term" value="F:oxidoreductase activity"/>
    <property type="evidence" value="ECO:0007669"/>
    <property type="project" value="UniProtKB-KW"/>
</dbReference>
<dbReference type="GO" id="GO:0015979">
    <property type="term" value="P:photosynthesis"/>
    <property type="evidence" value="ECO:0007669"/>
    <property type="project" value="UniProtKB-UniRule"/>
</dbReference>
<dbReference type="FunFam" id="1.20.1130.10:FF:000001">
    <property type="entry name" value="Photosystem I P700 chlorophyll a apoprotein A2"/>
    <property type="match status" value="1"/>
</dbReference>
<dbReference type="Gene3D" id="1.20.1130.10">
    <property type="entry name" value="Photosystem I PsaA/PsaB"/>
    <property type="match status" value="1"/>
</dbReference>
<dbReference type="HAMAP" id="MF_00482">
    <property type="entry name" value="PSI_PsaB"/>
    <property type="match status" value="1"/>
</dbReference>
<dbReference type="InterPro" id="IPR001280">
    <property type="entry name" value="PSI_PsaA/B"/>
</dbReference>
<dbReference type="InterPro" id="IPR020586">
    <property type="entry name" value="PSI_PsaA/B_CS"/>
</dbReference>
<dbReference type="InterPro" id="IPR036408">
    <property type="entry name" value="PSI_PsaA/B_sf"/>
</dbReference>
<dbReference type="InterPro" id="IPR006244">
    <property type="entry name" value="PSI_PsaB"/>
</dbReference>
<dbReference type="NCBIfam" id="TIGR01336">
    <property type="entry name" value="psaB"/>
    <property type="match status" value="1"/>
</dbReference>
<dbReference type="PANTHER" id="PTHR30128">
    <property type="entry name" value="OUTER MEMBRANE PROTEIN, OMPA-RELATED"/>
    <property type="match status" value="1"/>
</dbReference>
<dbReference type="PANTHER" id="PTHR30128:SF19">
    <property type="entry name" value="PHOTOSYSTEM I P700 CHLOROPHYLL A APOPROTEIN A1-RELATED"/>
    <property type="match status" value="1"/>
</dbReference>
<dbReference type="Pfam" id="PF00223">
    <property type="entry name" value="PsaA_PsaB"/>
    <property type="match status" value="1"/>
</dbReference>
<dbReference type="PIRSF" id="PIRSF002905">
    <property type="entry name" value="PSI_A"/>
    <property type="match status" value="1"/>
</dbReference>
<dbReference type="PRINTS" id="PR00257">
    <property type="entry name" value="PHOTSYSPSAAB"/>
</dbReference>
<dbReference type="SUPFAM" id="SSF81558">
    <property type="entry name" value="Photosystem I subunits PsaA/PsaB"/>
    <property type="match status" value="1"/>
</dbReference>
<dbReference type="PROSITE" id="PS00419">
    <property type="entry name" value="PHOTOSYSTEM_I_PSAAB"/>
    <property type="match status" value="1"/>
</dbReference>
<sequence>MATKLFPKFSQGLAQDPTTRRIWYGLAMAHDFESHDGMTEENLYQKIFASHFGQLSIIFLWTSGNLFHVAWQGNFEQWVTDPVHIRPIAHAIWDPHFGQPAVEAFTRGGASGPVNISTSGVYQWWYTIGMRTNQDLYVGSVFLALVSAIFLFAGWLHLQPNFQPSLSWFKDAESRLNHHLSGLFGVSSLAWTGHLVHVAIPESRGQHVGWDNFLSVLPHPQGLTPFFTGNWAAYAQSPDTASHVFGTAQGSGQAILTFLGGFHPQTQSLWLTDMAHHHLAIAVIFIVAGHMYRTNFGIGHRMQAILEAHTPPSGSLGAGHKGLFDTVNNSLHFQLGLALASVGTITSLVAQHMYSLPPYAFQAIDFTTQAALYTHHQYIAGFIMCGAFAHGAIFFIRDYDPEQNKGNVLARMLDHKEALISHLSWVSLFLGFHTLGLYVHNDVMQAFGTPEKQILIEPVFAQWIQAAHGKALYGFDFLLSSKTSAAFANGQSLWLPGWLDAINNNQNSLFLTIGPGDFLVHHAIALGLHTTTLILVKGALDARGSKLMPDKKDFGYSFPCDGPGRGGTCDISAYDAFYLAVFWMLNTIGWVTFYWHWKHLTLWQGNVAQFDESSTYLMGWLRDYLWLNSSQLINGYNPFGMNSLSVWAWTFLFGHLIYATGFMFLISWRGYWQELIETLVWAHEKTPLANLVYWKDKPVALSIVQARLVGLAHFSVGYIFTYAAFLIASTSGRFG</sequence>
<reference key="1">
    <citation type="journal article" date="1987" name="EMBO J.">
        <title>Structural and transcription analysis of two homologous genes for the P700 chlorophyll a-apoproteins in Chlamydomonas reinhardtii: evidence for in vivo trans-splicing.</title>
        <authorList>
            <person name="Kueck U."/>
            <person name="Choquet Y."/>
            <person name="Schneider M."/>
            <person name="Dron M."/>
            <person name="Bennoun P."/>
        </authorList>
    </citation>
    <scope>NUCLEOTIDE SEQUENCE [GENOMIC DNA]</scope>
    <source>
        <strain>CC-406</strain>
    </source>
</reference>
<reference key="2">
    <citation type="submission" date="2002-11" db="EMBL/GenBank/DDBJ databases">
        <title>Revised sequence of the Chlamydomonas reinhardtii chloroplast gene psaB.</title>
        <authorList>
            <person name="Forsyth A.M."/>
            <person name="Redding K."/>
            <person name="Purton S."/>
        </authorList>
    </citation>
    <scope>NUCLEOTIDE SEQUENCE [GENOMIC DNA]</scope>
</reference>
<reference key="3">
    <citation type="journal article" date="2009" name="BMC Evol. Biol.">
        <title>Nucleotide diversity of the Chlamydomonas reinhardtii plastid genome: addressing the mutational-hazard hypothesis.</title>
        <authorList>
            <person name="Smith D.R."/>
            <person name="Lee R.W."/>
        </authorList>
    </citation>
    <scope>NUCLEOTIDE SEQUENCE [LARGE SCALE GENOMIC DNA]</scope>
    <source>
        <strain>CC-503</strain>
    </source>
</reference>
<reference key="4">
    <citation type="journal article" date="2000" name="Mol. Phylogenet. Evol.">
        <title>Origin and evolution of the colonial Volvocales (Chlorophyceae) as inferred from multiple, chloroplast gene sequences.</title>
        <authorList>
            <person name="Nozaki H."/>
            <person name="Misawa K."/>
            <person name="Kajita T."/>
            <person name="Kato M."/>
            <person name="Nohara S."/>
            <person name="Watanabe M.M."/>
        </authorList>
    </citation>
    <scope>NUCLEOTIDE SEQUENCE [GENOMIC DNA] OF 80-578</scope>
    <source>
        <strain>137c / CC-125</strain>
    </source>
</reference>
<reference key="5">
    <citation type="journal article" date="1982" name="J. Mol. Biol.">
        <title>Sequence of the chloroplast DNA region of Chlamydomonas reinhardii containing the gene of the large subunit of ribulose bisphosphate carboxylase and parts of its flanking genes.</title>
        <authorList>
            <person name="Dron M."/>
            <person name="Rahire M."/>
            <person name="Rochaix J.-D."/>
        </authorList>
    </citation>
    <scope>NUCLEOTIDE SEQUENCE [GENOMIC DNA] OF 493-735</scope>
</reference>
<reference key="6">
    <citation type="journal article" date="1991" name="FEBS Lett.">
        <title>Transformation of chloroplasts with the psaB gene encoding a polypeptide of the photosystem I reaction center.</title>
        <authorList>
            <person name="Bingham S.E."/>
            <person name="Xu R.H."/>
            <person name="Webber A.N."/>
        </authorList>
    </citation>
    <scope>PARTIAL NUCLEOTIDE SEQUENCE [GENOMIC DNA] (MUTANT AC-U-G-2.3)</scope>
    <source>
        <strain>CC-2341</strain>
    </source>
</reference>
<reference key="7">
    <citation type="journal article" date="2002" name="Plant Cell">
        <title>The Chlamydomonas reinhardtii plastid chromosome: islands of genes in a sea of repeats.</title>
        <authorList>
            <person name="Maul J.E."/>
            <person name="Lilly J.W."/>
            <person name="Cui L."/>
            <person name="dePamphilis C.W."/>
            <person name="Miller W."/>
            <person name="Harris E.H."/>
            <person name="Stern D.B."/>
        </authorList>
    </citation>
    <scope>IDENTIFICATION</scope>
    <scope>COMPLETE PLASTID GENOME</scope>
</reference>
<reference key="8">
    <citation type="journal article" date="1993" name="J. Biol. Chem.">
        <title>Site-directed mutagenesis of the photosystem I reaction center in chloroplasts. The proline-cysteine motif.</title>
        <authorList>
            <person name="Webber A.N."/>
            <person name="Gibbs P.B."/>
            <person name="Ward J.B."/>
            <person name="Bingham S.E."/>
        </authorList>
    </citation>
    <scope>MUTAGENESIS OF PRO-559 AND CYS-560</scope>
    <source>
        <strain>137c / CC-125</strain>
        <strain>CC-2341</strain>
    </source>
</reference>
<reference key="9">
    <citation type="journal article" date="1995" name="Biochemistry">
        <title>Evidence that the FX domain in photosystem I interacts with the subunit PsaC: site-directed changes in PsaB destabilize the subunit interaction in Chlamydomonas reinhardtii.</title>
        <authorList>
            <person name="Rodday S.M."/>
            <person name="Webber A.N."/>
            <person name="Bingham S.E."/>
            <person name="Biggins J."/>
        </authorList>
    </citation>
    <scope>MUTAGENESIS OF ASP-561; PRO-563 AND ARG-565</scope>
    <source>
        <strain>137c / CC-125</strain>
    </source>
</reference>
<reference key="10">
    <citation type="journal article" date="1996" name="Biochemistry">
        <title>Site-directed mutations affecting the spectroscopic characteristics and midpoint potential of the primary donor in photosystem I.</title>
        <authorList>
            <person name="Webber A.N."/>
            <person name="Su H."/>
            <person name="Bingham S.E."/>
            <person name="Kaess H."/>
            <person name="Krabben L."/>
            <person name="Kuhn M."/>
            <person name="Jordan R."/>
            <person name="Schlodder E."/>
            <person name="Lubitz W."/>
        </authorList>
    </citation>
    <scope>MUTAGENESIS OF HIS-655</scope>
    <source>
        <strain>FuD7</strain>
    </source>
</reference>
<reference key="11">
    <citation type="journal article" date="1998" name="EMBO J.">
        <title>A systematic survey of conserved histidines in the core subunits of photosystem I by site-directed mutagenesis reveals the likely axial ligands of P700.</title>
        <authorList>
            <person name="Redding K."/>
            <person name="MacMillan F."/>
            <person name="Leibl W."/>
            <person name="Brettel K."/>
            <person name="Hanley J."/>
            <person name="Rutherford A.W."/>
            <person name="Breton J."/>
            <person name="Rochaix J.-D."/>
        </authorList>
    </citation>
    <scope>MUTAGENESIS OF CONSERVED HISTIDINES</scope>
    <source>
        <strain>137c / CC-125</strain>
    </source>
</reference>
<reference key="12">
    <citation type="journal article" date="2000" name="Biochemistry">
        <title>Influence of the axial ligands on the spectral properties of P700 of photosystem I: a study of site-directed mutants.</title>
        <authorList>
            <person name="Krabben L."/>
            <person name="Schlodder E."/>
            <person name="Jordan R."/>
            <person name="Carbonera D."/>
            <person name="Giacometti G."/>
            <person name="Lee H."/>
            <person name="Webber A.N."/>
            <person name="Lubitz W."/>
        </authorList>
    </citation>
    <scope>MUTAGENESIS OF HIS-655</scope>
    <source>
        <strain>CC-2696</strain>
    </source>
</reference>
<reference key="13">
    <citation type="journal article" date="2001" name="Proc. Natl. Acad. Sci. U.S.A.">
        <title>Evidence for two active branches for electron transfer in photosystem I.</title>
        <authorList>
            <person name="Guergova-Kuras M."/>
            <person name="Boudreaux B."/>
            <person name="Joliot A."/>
            <person name="Joliot P."/>
            <person name="Redding K."/>
        </authorList>
    </citation>
    <scope>MUTAGENESIS OF A1 PHYLLOQUINONE LIGANDS</scope>
    <source>
        <strain>137c / CC-125</strain>
    </source>
</reference>
<reference key="14">
    <citation type="journal article" date="2003" name="Eur. J. Biochem.">
        <title>Reversed-phase HPLC determination of chlorophyll a' and phylloquinone in photosystem I of oxygenic photosynthetic organisms.</title>
        <authorList>
            <person name="Nakamura A."/>
            <person name="Akai M."/>
            <person name="Yoshida E."/>
            <person name="Taki T."/>
            <person name="Watanabe T."/>
        </authorList>
    </citation>
    <scope>PRESENCE OF CHLOROPHYLL A' IN PSI</scope>
    <source>
        <strain>IAM C-9</strain>
    </source>
</reference>
<reference key="15">
    <citation type="journal article" date="2001" name="J. Biol. Chem.">
        <title>Mutations in both sides of the photosystem I reaction center identify the phylloquinone observed by electron paramagnetic resonance spectroscopy.</title>
        <authorList>
            <person name="Boudreaux B."/>
            <person name="MacMillan F."/>
            <person name="Teutloff C."/>
            <person name="Agalarov R."/>
            <person name="Gu F."/>
            <person name="Grimaldi S."/>
            <person name="Bittl R."/>
            <person name="Brettel K."/>
            <person name="Redding K."/>
        </authorList>
    </citation>
    <scope>MUTAGENESIS OF A1 PHYLLOQUINONE LIGANDS</scope>
    <source>
        <strain>137c / CC-125</strain>
    </source>
</reference>
<proteinExistence type="evidence at protein level"/>
<accession>P09144</accession>
<accession>B7U1I8</accession>
<accession>Q36714</accession>
<accession>Q8HR52</accession>
<accession>Q9GH44</accession>
<comment type="function">
    <text>PsaA and PsaB bind P700, the primary electron donor of photosystem I (PSI), as well as the electron acceptors A0, A1 and FX. PSI is a plastocyanin/cytochrome c6-ferredoxin oxidoreductase, converting photonic excitation into a charge separation, which transfers an electron from the donor P700 chlorophyll pair to the spectroscopically characterized acceptors A0, A1, FX, FA and FB in turn. Oxidized P700 is reduced on the lumenal side of the thylakoid membrane by plastocyanin or cytochrome c6.</text>
</comment>
<comment type="function">
    <text>Both potential cofactor branches in PSI seem to be active; however, electron transfer seems to proceed preferentially down the path including the phylloquinone bound by PsaA.</text>
</comment>
<comment type="catalytic activity">
    <reaction>
        <text>reduced [plastocyanin] + hnu + oxidized [2Fe-2S]-[ferredoxin] = oxidized [plastocyanin] + reduced [2Fe-2S]-[ferredoxin]</text>
        <dbReference type="Rhea" id="RHEA:30407"/>
        <dbReference type="Rhea" id="RHEA-COMP:10000"/>
        <dbReference type="Rhea" id="RHEA-COMP:10001"/>
        <dbReference type="Rhea" id="RHEA-COMP:10039"/>
        <dbReference type="Rhea" id="RHEA-COMP:10040"/>
        <dbReference type="ChEBI" id="CHEBI:29036"/>
        <dbReference type="ChEBI" id="CHEBI:30212"/>
        <dbReference type="ChEBI" id="CHEBI:33737"/>
        <dbReference type="ChEBI" id="CHEBI:33738"/>
        <dbReference type="ChEBI" id="CHEBI:49552"/>
        <dbReference type="EC" id="1.97.1.12"/>
    </reaction>
</comment>
<comment type="cofactor">
    <text evidence="1">P700 is a chlorophyll a/chlorophyll a' dimer, A0 is one or more chlorophyll a, A1 is one or both phylloquinones and FX is a shared 4Fe-4S iron-sulfur center.</text>
</comment>
<comment type="subunit">
    <text>The PsaA/B heterodimer binds the P700 chlorophyll special pair and subsequent electron acceptors. PSI consists of a core antenna complex that captures photons, and an electron transfer chain that converts photonic excitation into a charge separation. The eukaryotic PSI reaction center is composed of at least 11 subunits.</text>
</comment>
<comment type="subcellular location">
    <subcellularLocation>
        <location>Plastid</location>
        <location>Chloroplast thylakoid membrane</location>
        <topology>Multi-pass membrane protein</topology>
    </subcellularLocation>
</comment>
<comment type="similarity">
    <text evidence="7">Belongs to the PsaA/PsaB family.</text>
</comment>
<evidence type="ECO:0000250" key="1"/>
<evidence type="ECO:0000255" key="2"/>
<evidence type="ECO:0000269" key="3">
    <source>
    </source>
</evidence>
<evidence type="ECO:0000269" key="4">
    <source>
    </source>
</evidence>
<evidence type="ECO:0000269" key="5">
    <source>
    </source>
</evidence>
<evidence type="ECO:0000269" key="6">
    <source>
    </source>
</evidence>
<evidence type="ECO:0000305" key="7"/>
<evidence type="ECO:0007829" key="8">
    <source>
        <dbReference type="PDB" id="6IJO"/>
    </source>
</evidence>
<evidence type="ECO:0007829" key="9">
    <source>
        <dbReference type="PDB" id="6JO5"/>
    </source>
</evidence>
<evidence type="ECO:0007829" key="10">
    <source>
        <dbReference type="PDB" id="7BLX"/>
    </source>
</evidence>
<evidence type="ECO:0007829" key="11">
    <source>
        <dbReference type="PDB" id="7D0J"/>
    </source>
</evidence>
<evidence type="ECO:0007829" key="12">
    <source>
        <dbReference type="PDB" id="7DZ7"/>
    </source>
</evidence>
<evidence type="ECO:0007829" key="13">
    <source>
        <dbReference type="PDB" id="7R3K"/>
    </source>
</evidence>
<evidence type="ECO:0007829" key="14">
    <source>
        <dbReference type="PDB" id="8H2U"/>
    </source>
</evidence>
<geneLocation type="chloroplast"/>
<organism>
    <name type="scientific">Chlamydomonas reinhardtii</name>
    <name type="common">Chlamydomonas smithii</name>
    <dbReference type="NCBI Taxonomy" id="3055"/>
    <lineage>
        <taxon>Eukaryota</taxon>
        <taxon>Viridiplantae</taxon>
        <taxon>Chlorophyta</taxon>
        <taxon>core chlorophytes</taxon>
        <taxon>Chlorophyceae</taxon>
        <taxon>CS clade</taxon>
        <taxon>Chlamydomonadales</taxon>
        <taxon>Chlamydomonadaceae</taxon>
        <taxon>Chlamydomonas</taxon>
    </lineage>
</organism>
<feature type="chain" id="PRO_0000088609" description="Photosystem I P700 chlorophyll a apoprotein A2">
    <location>
        <begin position="1"/>
        <end position="735"/>
    </location>
</feature>
<feature type="transmembrane region" description="Helical; Name=I" evidence="2">
    <location>
        <begin position="47"/>
        <end position="70"/>
    </location>
</feature>
<feature type="transmembrane region" description="Helical; Name=II" evidence="2">
    <location>
        <begin position="136"/>
        <end position="159"/>
    </location>
</feature>
<feature type="transmembrane region" description="Helical; Name=III" evidence="2">
    <location>
        <begin position="176"/>
        <end position="200"/>
    </location>
</feature>
<feature type="transmembrane region" description="Helical; Name=IV" evidence="2">
    <location>
        <begin position="274"/>
        <end position="292"/>
    </location>
</feature>
<feature type="transmembrane region" description="Helical; Name=V" evidence="2">
    <location>
        <begin position="331"/>
        <end position="354"/>
    </location>
</feature>
<feature type="transmembrane region" description="Helical; Name=VI" evidence="2">
    <location>
        <begin position="370"/>
        <end position="396"/>
    </location>
</feature>
<feature type="transmembrane region" description="Helical; Name=VII" evidence="2">
    <location>
        <begin position="418"/>
        <end position="440"/>
    </location>
</feature>
<feature type="transmembrane region" description="Helical; Name=VIII" evidence="2">
    <location>
        <begin position="518"/>
        <end position="536"/>
    </location>
</feature>
<feature type="transmembrane region" description="Helical; Name=IX" evidence="2">
    <location>
        <begin position="576"/>
        <end position="597"/>
    </location>
</feature>
<feature type="transmembrane region" description="Helical; Name=X" evidence="2">
    <location>
        <begin position="644"/>
        <end position="666"/>
    </location>
</feature>
<feature type="transmembrane region" description="Helical; Name=XI" evidence="2">
    <location>
        <begin position="708"/>
        <end position="728"/>
    </location>
</feature>
<feature type="binding site">
    <location>
        <position position="560"/>
    </location>
    <ligand>
        <name>[4Fe-4S] cluster</name>
        <dbReference type="ChEBI" id="CHEBI:49883"/>
        <note>ligand shared between dimeric partners</note>
    </ligand>
</feature>
<feature type="binding site" evidence="1">
    <location>
        <position position="569"/>
    </location>
    <ligand>
        <name>[4Fe-4S] cluster</name>
        <dbReference type="ChEBI" id="CHEBI:49883"/>
        <note>ligand shared between dimeric partners</note>
    </ligand>
</feature>
<feature type="binding site" description="axial binding residue">
    <location>
        <position position="655"/>
    </location>
    <ligand>
        <name>chlorophyll a</name>
        <dbReference type="ChEBI" id="CHEBI:58416"/>
        <label>B1</label>
    </ligand>
    <ligandPart>
        <name>Mg</name>
        <dbReference type="ChEBI" id="CHEBI:25107"/>
    </ligandPart>
</feature>
<feature type="binding site" description="axial binding residue" evidence="1">
    <location>
        <position position="663"/>
    </location>
    <ligand>
        <name>chlorophyll a</name>
        <dbReference type="ChEBI" id="CHEBI:58416"/>
        <label>B3</label>
    </ligand>
    <ligandPart>
        <name>Mg</name>
        <dbReference type="ChEBI" id="CHEBI:25107"/>
    </ligandPart>
</feature>
<feature type="binding site" evidence="1">
    <location>
        <position position="671"/>
    </location>
    <ligand>
        <name>chlorophyll a</name>
        <dbReference type="ChEBI" id="CHEBI:58416"/>
        <label>B3</label>
    </ligand>
</feature>
<feature type="binding site">
    <location>
        <position position="672"/>
    </location>
    <ligand>
        <name>phylloquinone</name>
        <dbReference type="ChEBI" id="CHEBI:18067"/>
        <label>B</label>
    </ligand>
</feature>
<feature type="mutagenesis site" description="Assembles functional PSI. Reaction center is somewhat unstable and interaction with PsaC is impaired. The L mutant is less stable than the A mutant." evidence="5">
    <original>P</original>
    <variation>A</variation>
    <variation>L</variation>
    <location>
        <position position="559"/>
    </location>
</feature>
<feature type="mutagenesis site" description="Loss of PSI assembly and function." evidence="5">
    <original>C</original>
    <variation>H</variation>
    <location>
        <position position="560"/>
    </location>
</feature>
<feature type="mutagenesis site" description="Loss of PSI assembly and function." evidence="4">
    <original>D</original>
    <variation>N</variation>
    <location>
        <position position="561"/>
    </location>
</feature>
<feature type="mutagenesis site" description="Assembles functional PSI. Reaction center is somewhat unstable and interaction with PsaC is impaired." evidence="4">
    <original>P</original>
    <variation>L</variation>
    <location>
        <position position="563"/>
    </location>
</feature>
<feature type="mutagenesis site" description="Loss of PSI assembly and function." evidence="4">
    <original>R</original>
    <variation>E</variation>
    <location>
        <position position="565"/>
    </location>
</feature>
<feature type="mutagenesis site" description="Contains somewhat decreased amounts of PSI, depending on the strain; significantly changes the spin density of the P700+ cation radical." evidence="3 6">
    <original>H</original>
    <variation>C</variation>
    <variation>G</variation>
    <variation>N</variation>
    <variation>S</variation>
    <location>
        <position position="655"/>
    </location>
</feature>
<feature type="mutagenesis site" description="Very little PSI detected." evidence="3 6">
    <original>H</original>
    <variation>D</variation>
    <location>
        <position position="655"/>
    </location>
</feature>
<feature type="mutagenesis site" description="Loss of P700 function." evidence="3 6">
    <original>H</original>
    <variation>F</variation>
    <variation>L</variation>
    <location>
        <position position="655"/>
    </location>
</feature>
<feature type="mutagenesis site" description="Impairment of P700 function. More severe; when associated with 'Q-676' in PsaA." evidence="3 6">
    <original>H</original>
    <variation>Q</variation>
    <location>
        <position position="655"/>
    </location>
</feature>
<feature type="mutagenesis site" description="No PSI detected." evidence="3 6">
    <original>H</original>
    <variation>R</variation>
    <location>
        <position position="655"/>
    </location>
</feature>
<feature type="mutagenesis site" description="Still able to photoaccumulate an electron on A1.">
    <original>W</original>
    <variation>F</variation>
    <location>
        <position position="672"/>
    </location>
</feature>
<feature type="sequence conflict" description="In Ref. 1; CAA29287." evidence="7" ref="1">
    <original>Q</original>
    <variation>R</variation>
    <location>
        <position position="15"/>
    </location>
</feature>
<feature type="sequence conflict" description="In Ref. 1; CAA29287." evidence="7" ref="1">
    <original>T</original>
    <variation>A</variation>
    <location>
        <position position="18"/>
    </location>
</feature>
<feature type="sequence conflict" description="In Ref. 1; CAA29287." evidence="7" ref="1">
    <original>R</original>
    <variation>I</variation>
    <location>
        <position position="21"/>
    </location>
</feature>
<feature type="sequence conflict" description="In Ref. 1; CAA29287." evidence="7" ref="1">
    <original>GM</original>
    <variation>VW</variation>
    <location>
        <begin position="37"/>
        <end position="38"/>
    </location>
</feature>
<feature type="sequence conflict" description="In Ref. 1; CAA29287." evidence="7" ref="1">
    <original>FA</original>
    <variation>IS</variation>
    <location>
        <begin position="48"/>
        <end position="49"/>
    </location>
</feature>
<feature type="sequence conflict" description="In Ref. 1; CAA29287." evidence="7" ref="1">
    <original>A</original>
    <variation>C</variation>
    <location>
        <position position="89"/>
    </location>
</feature>
<feature type="sequence conflict" description="In Ref. 1; CAA29287." evidence="7" ref="1">
    <original>S</original>
    <variation>LQ</variation>
    <location>
        <position position="203"/>
    </location>
</feature>
<feature type="sequence conflict" description="In Ref. 1; CAA29287." evidence="7" ref="1">
    <original>I</original>
    <variation>N</variation>
    <location>
        <position position="298"/>
    </location>
</feature>
<feature type="sequence conflict" description="In Ref. 1; CAA29287." evidence="7" ref="1">
    <original>L</original>
    <variation>I</variation>
    <location>
        <position position="335"/>
    </location>
</feature>
<feature type="sequence conflict" description="In Ref. 1; CAA29287 and 5; J01399." evidence="7" ref="1 5">
    <original>P</original>
    <variation>L</variation>
    <location>
        <position position="515"/>
    </location>
</feature>
<feature type="strand" evidence="13">
    <location>
        <begin position="4"/>
        <end position="6"/>
    </location>
</feature>
<feature type="helix" evidence="13">
    <location>
        <begin position="11"/>
        <end position="14"/>
    </location>
</feature>
<feature type="strand" evidence="11">
    <location>
        <begin position="17"/>
        <end position="19"/>
    </location>
</feature>
<feature type="helix" evidence="13">
    <location>
        <begin position="20"/>
        <end position="27"/>
    </location>
</feature>
<feature type="strand" evidence="12">
    <location>
        <begin position="28"/>
        <end position="30"/>
    </location>
</feature>
<feature type="helix" evidence="13">
    <location>
        <begin position="32"/>
        <end position="34"/>
    </location>
</feature>
<feature type="helix" evidence="13">
    <location>
        <begin position="40"/>
        <end position="72"/>
    </location>
</feature>
<feature type="helix" evidence="13">
    <location>
        <begin position="75"/>
        <end position="78"/>
    </location>
</feature>
<feature type="turn" evidence="13">
    <location>
        <begin position="82"/>
        <end position="84"/>
    </location>
</feature>
<feature type="strand" evidence="13">
    <location>
        <begin position="88"/>
        <end position="91"/>
    </location>
</feature>
<feature type="helix" evidence="13">
    <location>
        <begin position="99"/>
        <end position="105"/>
    </location>
</feature>
<feature type="strand" evidence="13">
    <location>
        <begin position="111"/>
        <end position="116"/>
    </location>
</feature>
<feature type="helix" evidence="13">
    <location>
        <begin position="121"/>
        <end position="127"/>
    </location>
</feature>
<feature type="helix" evidence="13">
    <location>
        <begin position="133"/>
        <end position="156"/>
    </location>
</feature>
<feature type="helix" evidence="12">
    <location>
        <begin position="160"/>
        <end position="162"/>
    </location>
</feature>
<feature type="helix" evidence="13">
    <location>
        <begin position="166"/>
        <end position="170"/>
    </location>
</feature>
<feature type="helix" evidence="13">
    <location>
        <begin position="172"/>
        <end position="181"/>
    </location>
</feature>
<feature type="turn" evidence="13">
    <location>
        <begin position="182"/>
        <end position="184"/>
    </location>
</feature>
<feature type="helix" evidence="13">
    <location>
        <begin position="185"/>
        <end position="197"/>
    </location>
</feature>
<feature type="helix" evidence="13">
    <location>
        <begin position="199"/>
        <end position="203"/>
    </location>
</feature>
<feature type="turn" evidence="13">
    <location>
        <begin position="210"/>
        <end position="212"/>
    </location>
</feature>
<feature type="turn" evidence="8">
    <location>
        <begin position="213"/>
        <end position="215"/>
    </location>
</feature>
<feature type="turn" evidence="13">
    <location>
        <begin position="220"/>
        <end position="223"/>
    </location>
</feature>
<feature type="helix" evidence="13">
    <location>
        <begin position="224"/>
        <end position="228"/>
    </location>
</feature>
<feature type="helix" evidence="13">
    <location>
        <begin position="231"/>
        <end position="235"/>
    </location>
</feature>
<feature type="turn" evidence="13">
    <location>
        <begin position="264"/>
        <end position="266"/>
    </location>
</feature>
<feature type="helix" evidence="13">
    <location>
        <begin position="271"/>
        <end position="288"/>
    </location>
</feature>
<feature type="strand" evidence="13">
    <location>
        <begin position="294"/>
        <end position="297"/>
    </location>
</feature>
<feature type="helix" evidence="13">
    <location>
        <begin position="302"/>
        <end position="308"/>
    </location>
</feature>
<feature type="helix" evidence="12">
    <location>
        <begin position="312"/>
        <end position="314"/>
    </location>
</feature>
<feature type="turn" evidence="13">
    <location>
        <begin position="315"/>
        <end position="322"/>
    </location>
</feature>
<feature type="helix" evidence="13">
    <location>
        <begin position="323"/>
        <end position="328"/>
    </location>
</feature>
<feature type="helix" evidence="13">
    <location>
        <begin position="331"/>
        <end position="355"/>
    </location>
</feature>
<feature type="strand" evidence="12">
    <location>
        <begin position="363"/>
        <end position="365"/>
    </location>
</feature>
<feature type="helix" evidence="13">
    <location>
        <begin position="366"/>
        <end position="397"/>
    </location>
</feature>
<feature type="helix" evidence="13">
    <location>
        <begin position="401"/>
        <end position="404"/>
    </location>
</feature>
<feature type="strand" evidence="8">
    <location>
        <begin position="405"/>
        <end position="407"/>
    </location>
</feature>
<feature type="helix" evidence="13">
    <location>
        <begin position="408"/>
        <end position="414"/>
    </location>
</feature>
<feature type="helix" evidence="13">
    <location>
        <begin position="416"/>
        <end position="446"/>
    </location>
</feature>
<feature type="helix" evidence="13">
    <location>
        <begin position="450"/>
        <end position="452"/>
    </location>
</feature>
<feature type="helix" evidence="13">
    <location>
        <begin position="459"/>
        <end position="468"/>
    </location>
</feature>
<feature type="helix" evidence="13">
    <location>
        <begin position="478"/>
        <end position="480"/>
    </location>
</feature>
<feature type="strand" evidence="14">
    <location>
        <begin position="482"/>
        <end position="484"/>
    </location>
</feature>
<feature type="helix" evidence="13">
    <location>
        <begin position="485"/>
        <end position="489"/>
    </location>
</feature>
<feature type="turn" evidence="13">
    <location>
        <begin position="490"/>
        <end position="494"/>
    </location>
</feature>
<feature type="helix" evidence="13">
    <location>
        <begin position="495"/>
        <end position="502"/>
    </location>
</feature>
<feature type="strand" evidence="9">
    <location>
        <begin position="505"/>
        <end position="508"/>
    </location>
</feature>
<feature type="helix" evidence="13">
    <location>
        <begin position="515"/>
        <end position="540"/>
    </location>
</feature>
<feature type="helix" evidence="13">
    <location>
        <begin position="551"/>
        <end position="553"/>
    </location>
</feature>
<feature type="strand" evidence="13">
    <location>
        <begin position="559"/>
        <end position="561"/>
    </location>
</feature>
<feature type="helix" evidence="13">
    <location>
        <begin position="573"/>
        <end position="604"/>
    </location>
</feature>
<feature type="helix" evidence="13">
    <location>
        <begin position="608"/>
        <end position="613"/>
    </location>
</feature>
<feature type="strand" evidence="10">
    <location>
        <begin position="614"/>
        <end position="616"/>
    </location>
</feature>
<feature type="helix" evidence="13">
    <location>
        <begin position="617"/>
        <end position="623"/>
    </location>
</feature>
<feature type="turn" evidence="13">
    <location>
        <begin position="624"/>
        <end position="626"/>
    </location>
</feature>
<feature type="helix" evidence="13">
    <location>
        <begin position="627"/>
        <end position="629"/>
    </location>
</feature>
<feature type="helix" evidence="13">
    <location>
        <begin position="630"/>
        <end position="633"/>
    </location>
</feature>
<feature type="strand" evidence="13">
    <location>
        <begin position="635"/>
        <end position="637"/>
    </location>
</feature>
<feature type="helix" evidence="13">
    <location>
        <begin position="645"/>
        <end position="666"/>
    </location>
</feature>
<feature type="helix" evidence="13">
    <location>
        <begin position="669"/>
        <end position="685"/>
    </location>
</feature>
<feature type="helix" evidence="13">
    <location>
        <begin position="689"/>
        <end position="691"/>
    </location>
</feature>
<feature type="strand" evidence="13">
    <location>
        <begin position="695"/>
        <end position="697"/>
    </location>
</feature>
<feature type="helix" evidence="13">
    <location>
        <begin position="703"/>
        <end position="733"/>
    </location>
</feature>
<keyword id="KW-0002">3D-structure</keyword>
<keyword id="KW-0004">4Fe-4S</keyword>
<keyword id="KW-0148">Chlorophyll</keyword>
<keyword id="KW-0150">Chloroplast</keyword>
<keyword id="KW-0157">Chromophore</keyword>
<keyword id="KW-0249">Electron transport</keyword>
<keyword id="KW-0408">Iron</keyword>
<keyword id="KW-0411">Iron-sulfur</keyword>
<keyword id="KW-0460">Magnesium</keyword>
<keyword id="KW-0472">Membrane</keyword>
<keyword id="KW-0479">Metal-binding</keyword>
<keyword id="KW-0560">Oxidoreductase</keyword>
<keyword id="KW-0602">Photosynthesis</keyword>
<keyword id="KW-0603">Photosystem I</keyword>
<keyword id="KW-0934">Plastid</keyword>
<keyword id="KW-1185">Reference proteome</keyword>
<keyword id="KW-0793">Thylakoid</keyword>
<keyword id="KW-0812">Transmembrane</keyword>
<keyword id="KW-1133">Transmembrane helix</keyword>
<keyword id="KW-0813">Transport</keyword>